<keyword id="KW-0249">Electron transport</keyword>
<keyword id="KW-0274">FAD</keyword>
<keyword id="KW-0285">Flavoprotein</keyword>
<keyword id="KW-0521">NADP</keyword>
<keyword id="KW-0560">Oxidoreductase</keyword>
<keyword id="KW-0813">Transport</keyword>
<dbReference type="EC" id="1.18.1.-"/>
<dbReference type="EMBL" id="AF456128">
    <property type="protein sequence ID" value="AAL57615.1"/>
    <property type="molecule type" value="Genomic_DNA"/>
</dbReference>
<dbReference type="SMR" id="Q8VQF5"/>
<dbReference type="BioCyc" id="MetaCyc:MONOMER-17203"/>
<dbReference type="GO" id="GO:0016731">
    <property type="term" value="F:oxidoreductase activity, acting on iron-sulfur proteins as donors, NAD or NADP as acceptor"/>
    <property type="evidence" value="ECO:0000314"/>
    <property type="project" value="UniProtKB"/>
</dbReference>
<dbReference type="Gene3D" id="3.50.50.60">
    <property type="entry name" value="FAD/NAD(P)-binding domain"/>
    <property type="match status" value="1"/>
</dbReference>
<dbReference type="Gene3D" id="3.40.50.720">
    <property type="entry name" value="NAD(P)-binding Rossmann-like Domain"/>
    <property type="match status" value="1"/>
</dbReference>
<dbReference type="InterPro" id="IPR036188">
    <property type="entry name" value="FAD/NAD-bd_sf"/>
</dbReference>
<dbReference type="InterPro" id="IPR023753">
    <property type="entry name" value="FAD/NAD-binding_dom"/>
</dbReference>
<dbReference type="InterPro" id="IPR055275">
    <property type="entry name" value="Ferredox_Rdtase"/>
</dbReference>
<dbReference type="InterPro" id="IPR021163">
    <property type="entry name" value="Ferredox_Rdtase_adrenod"/>
</dbReference>
<dbReference type="PANTHER" id="PTHR48467">
    <property type="entry name" value="GLUTAMATE SYNTHASE 1 [NADH], CHLOROPLASTIC-LIKE"/>
    <property type="match status" value="1"/>
</dbReference>
<dbReference type="PANTHER" id="PTHR48467:SF1">
    <property type="entry name" value="GLUTAMATE SYNTHASE 1 [NADH], CHLOROPLASTIC-LIKE"/>
    <property type="match status" value="1"/>
</dbReference>
<dbReference type="Pfam" id="PF07992">
    <property type="entry name" value="Pyr_redox_2"/>
    <property type="match status" value="1"/>
</dbReference>
<dbReference type="PIRSF" id="PIRSF000362">
    <property type="entry name" value="FNR"/>
    <property type="match status" value="1"/>
</dbReference>
<dbReference type="PRINTS" id="PR00419">
    <property type="entry name" value="ADXRDTASE"/>
</dbReference>
<dbReference type="SUPFAM" id="SSF51971">
    <property type="entry name" value="Nucleotide-binding domain"/>
    <property type="match status" value="1"/>
</dbReference>
<proteinExistence type="inferred from homology"/>
<protein>
    <recommendedName>
        <fullName>Cindoxin reductase</fullName>
        <shortName>CdR</shortName>
        <ecNumber>1.18.1.-</ecNumber>
    </recommendedName>
    <alternativeName>
        <fullName evidence="4">NADPH-dependent flavodoxin/ferredoxin reductase</fullName>
    </alternativeName>
    <alternativeName>
        <fullName evidence="3">NADPH-dependent flavodoxin/ferrodoxin reductase</fullName>
    </alternativeName>
</protein>
<reference key="1">
    <citation type="journal article" date="2002" name="J. Biol. Chem.">
        <title>Cytochrome P450(cin) (CYP176A), isolation, expression, and characterization.</title>
        <authorList>
            <person name="Hawkes D.B."/>
            <person name="Adams G.W."/>
            <person name="Burlingame A.L."/>
            <person name="Ortiz de Montellano P.R."/>
            <person name="De Voss J.J."/>
        </authorList>
    </citation>
    <scope>NUCLEOTIDE SEQUENCE [GENOMIC DNA]</scope>
    <scope>FUNCTION</scope>
</reference>
<comment type="function">
    <text evidence="2">Involved in the degradation of cineol (eucalyptol). Catalyzes the reduction of cindoxin (CinC).</text>
</comment>
<comment type="cofactor">
    <cofactor evidence="1">
        <name>FAD</name>
        <dbReference type="ChEBI" id="CHEBI:57692"/>
    </cofactor>
</comment>
<comment type="similarity">
    <text evidence="4">Belongs to the ferredoxin--NADP reductase type 1 family.</text>
</comment>
<comment type="caution">
    <text evidence="4">The authors of PubMed:12016226 consistently use the word ferrodoxin instead of ferredoxin.</text>
</comment>
<name>CINB_CITBR</name>
<sequence>MSKLQHHSIGEVEPSIAIVGSGPAGCYTAQTLHKQWPSAQIVIFERLPVPYGLLRYGVSPDHQGTKAIARQFDRLFAEASVHFIGNVEVGKHISVEELQDAFDVVVLAAGLGADRPLPSLAGDAVYGAGQVMRWFNSHPDEQSFAPGFGATTTIIGNGNVAMDVVRLLAKHRDSFTGSDLDPQLIEKQPSRIHVVGRSPASAAKFDSMMIRELAEIDDAVFDVDVVDEPGHEDKRIHAKTKALLDLTAARAVPSPRVHVSFHFGWTPESLEPTGDGRTLRLVNTESRLAVKLIETDSVITAVGFGSGLRHEIDRVRFESAASDLDNGLLDTGLYCSGWFRRGPTGGIPANRLDAKMVCTRIIEDVASGAITPKKRGLEELATHLHPDTVDFTGWQRIDAVEASRTEHGRCRTKLPDIATMLDFARNRTHERTTDDTYRKQITDTVGHKEKR</sequence>
<gene>
    <name type="primary">cinB</name>
</gene>
<organism>
    <name type="scientific">Citrobacter braakii</name>
    <dbReference type="NCBI Taxonomy" id="57706"/>
    <lineage>
        <taxon>Bacteria</taxon>
        <taxon>Pseudomonadati</taxon>
        <taxon>Pseudomonadota</taxon>
        <taxon>Gammaproteobacteria</taxon>
        <taxon>Enterobacterales</taxon>
        <taxon>Enterobacteriaceae</taxon>
        <taxon>Citrobacter</taxon>
        <taxon>Citrobacter freundii complex</taxon>
    </lineage>
</organism>
<evidence type="ECO:0000250" key="1"/>
<evidence type="ECO:0000269" key="2">
    <source>
    </source>
</evidence>
<evidence type="ECO:0000303" key="3">
    <source>
    </source>
</evidence>
<evidence type="ECO:0000305" key="4"/>
<feature type="chain" id="PRO_0000422769" description="Cindoxin reductase">
    <location>
        <begin position="1"/>
        <end position="451"/>
    </location>
</feature>
<feature type="binding site" evidence="1">
    <location>
        <position position="24"/>
    </location>
    <ligand>
        <name>FAD</name>
        <dbReference type="ChEBI" id="CHEBI:57692"/>
    </ligand>
</feature>
<feature type="binding site" evidence="1">
    <location>
        <position position="45"/>
    </location>
    <ligand>
        <name>FAD</name>
        <dbReference type="ChEBI" id="CHEBI:57692"/>
    </ligand>
</feature>
<feature type="binding site" evidence="1">
    <location>
        <position position="53"/>
    </location>
    <ligand>
        <name>FAD</name>
        <dbReference type="ChEBI" id="CHEBI:57692"/>
    </ligand>
</feature>
<feature type="binding site" evidence="1">
    <location>
        <position position="89"/>
    </location>
    <ligand>
        <name>FAD</name>
        <dbReference type="ChEBI" id="CHEBI:57692"/>
    </ligand>
</feature>
<feature type="binding site" evidence="1">
    <location>
        <begin position="157"/>
        <end position="160"/>
    </location>
    <ligand>
        <name>NADP(+)</name>
        <dbReference type="ChEBI" id="CHEBI:58349"/>
    </ligand>
</feature>
<feature type="binding site" evidence="1">
    <location>
        <begin position="197"/>
        <end position="198"/>
    </location>
    <ligand>
        <name>NADP(+)</name>
        <dbReference type="ChEBI" id="CHEBI:58349"/>
    </ligand>
</feature>
<feature type="binding site" evidence="1">
    <location>
        <position position="338"/>
    </location>
    <ligand>
        <name>FAD</name>
        <dbReference type="ChEBI" id="CHEBI:57692"/>
    </ligand>
</feature>
<feature type="binding site" evidence="1">
    <location>
        <begin position="345"/>
        <end position="347"/>
    </location>
    <ligand>
        <name>FAD</name>
        <dbReference type="ChEBI" id="CHEBI:57692"/>
    </ligand>
</feature>
<feature type="binding site" evidence="1">
    <location>
        <position position="345"/>
    </location>
    <ligand>
        <name>NADP(+)</name>
        <dbReference type="ChEBI" id="CHEBI:58349"/>
    </ligand>
</feature>
<accession>Q8VQF5</accession>